<accession>B8H8Z3</accession>
<comment type="function">
    <text evidence="1">RNaseP catalyzes the removal of the 5'-leader sequence from pre-tRNA to produce the mature 5'-terminus. It can also cleave other RNA substrates such as 4.5S RNA. The protein component plays an auxiliary but essential role in vivo by binding to the 5'-leader sequence and broadening the substrate specificity of the ribozyme.</text>
</comment>
<comment type="catalytic activity">
    <reaction evidence="1">
        <text>Endonucleolytic cleavage of RNA, removing 5'-extranucleotides from tRNA precursor.</text>
        <dbReference type="EC" id="3.1.26.5"/>
    </reaction>
</comment>
<comment type="subunit">
    <text evidence="1">Consists of a catalytic RNA component (M1 or rnpB) and a protein subunit.</text>
</comment>
<comment type="similarity">
    <text evidence="1">Belongs to the RnpA family.</text>
</comment>
<feature type="chain" id="PRO_1000194599" description="Ribonuclease P protein component">
    <location>
        <begin position="1"/>
        <end position="136"/>
    </location>
</feature>
<feature type="region of interest" description="Disordered" evidence="2">
    <location>
        <begin position="116"/>
        <end position="136"/>
    </location>
</feature>
<feature type="compositionally biased region" description="Polar residues" evidence="2">
    <location>
        <begin position="126"/>
        <end position="136"/>
    </location>
</feature>
<keyword id="KW-0255">Endonuclease</keyword>
<keyword id="KW-0378">Hydrolase</keyword>
<keyword id="KW-0540">Nuclease</keyword>
<keyword id="KW-0694">RNA-binding</keyword>
<keyword id="KW-0819">tRNA processing</keyword>
<proteinExistence type="inferred from homology"/>
<name>RNPA_PSECP</name>
<gene>
    <name evidence="1" type="primary">rnpA</name>
    <name type="ordered locus">Achl_3936</name>
</gene>
<protein>
    <recommendedName>
        <fullName evidence="1">Ribonuclease P protein component</fullName>
        <shortName evidence="1">RNase P protein</shortName>
        <shortName evidence="1">RNaseP protein</shortName>
        <ecNumber evidence="1">3.1.26.5</ecNumber>
    </recommendedName>
    <alternativeName>
        <fullName evidence="1">Protein C5</fullName>
    </alternativeName>
</protein>
<sequence length="136" mass="14413">MLATRNRLRTSADFSTTVRSGVRNGRRNVVLYTAAIAAGEPSRIGFIVSKSVGNAVVRNLVKRRLREAGAASLREHGTGLAIVVRALPASASASWDQLREDYDAALESTLNRLAGRPQRAAAKGSAGTTQKGTPRA</sequence>
<dbReference type="EC" id="3.1.26.5" evidence="1"/>
<dbReference type="EMBL" id="CP001341">
    <property type="protein sequence ID" value="ACL41888.1"/>
    <property type="molecule type" value="Genomic_DNA"/>
</dbReference>
<dbReference type="RefSeq" id="WP_015939080.1">
    <property type="nucleotide sequence ID" value="NC_011886.1"/>
</dbReference>
<dbReference type="SMR" id="B8H8Z3"/>
<dbReference type="STRING" id="452863.Achl_3936"/>
<dbReference type="KEGG" id="ach:Achl_3936"/>
<dbReference type="eggNOG" id="COG0594">
    <property type="taxonomic scope" value="Bacteria"/>
</dbReference>
<dbReference type="HOGENOM" id="CLU_117179_4_1_11"/>
<dbReference type="OrthoDB" id="196964at2"/>
<dbReference type="Proteomes" id="UP000002505">
    <property type="component" value="Chromosome"/>
</dbReference>
<dbReference type="GO" id="GO:0030677">
    <property type="term" value="C:ribonuclease P complex"/>
    <property type="evidence" value="ECO:0007669"/>
    <property type="project" value="TreeGrafter"/>
</dbReference>
<dbReference type="GO" id="GO:0042781">
    <property type="term" value="F:3'-tRNA processing endoribonuclease activity"/>
    <property type="evidence" value="ECO:0007669"/>
    <property type="project" value="TreeGrafter"/>
</dbReference>
<dbReference type="GO" id="GO:0004526">
    <property type="term" value="F:ribonuclease P activity"/>
    <property type="evidence" value="ECO:0007669"/>
    <property type="project" value="UniProtKB-UniRule"/>
</dbReference>
<dbReference type="GO" id="GO:0000049">
    <property type="term" value="F:tRNA binding"/>
    <property type="evidence" value="ECO:0007669"/>
    <property type="project" value="UniProtKB-UniRule"/>
</dbReference>
<dbReference type="GO" id="GO:0001682">
    <property type="term" value="P:tRNA 5'-leader removal"/>
    <property type="evidence" value="ECO:0007669"/>
    <property type="project" value="UniProtKB-UniRule"/>
</dbReference>
<dbReference type="Gene3D" id="3.30.230.10">
    <property type="match status" value="1"/>
</dbReference>
<dbReference type="HAMAP" id="MF_00227">
    <property type="entry name" value="RNase_P"/>
    <property type="match status" value="1"/>
</dbReference>
<dbReference type="InterPro" id="IPR020568">
    <property type="entry name" value="Ribosomal_Su5_D2-typ_SF"/>
</dbReference>
<dbReference type="InterPro" id="IPR014721">
    <property type="entry name" value="Ribsml_uS5_D2-typ_fold_subgr"/>
</dbReference>
<dbReference type="InterPro" id="IPR000100">
    <property type="entry name" value="RNase_P"/>
</dbReference>
<dbReference type="InterPro" id="IPR020539">
    <property type="entry name" value="RNase_P_CS"/>
</dbReference>
<dbReference type="NCBIfam" id="TIGR00188">
    <property type="entry name" value="rnpA"/>
    <property type="match status" value="1"/>
</dbReference>
<dbReference type="PANTHER" id="PTHR33992">
    <property type="entry name" value="RIBONUCLEASE P PROTEIN COMPONENT"/>
    <property type="match status" value="1"/>
</dbReference>
<dbReference type="PANTHER" id="PTHR33992:SF1">
    <property type="entry name" value="RIBONUCLEASE P PROTEIN COMPONENT"/>
    <property type="match status" value="1"/>
</dbReference>
<dbReference type="Pfam" id="PF00825">
    <property type="entry name" value="Ribonuclease_P"/>
    <property type="match status" value="1"/>
</dbReference>
<dbReference type="SUPFAM" id="SSF54211">
    <property type="entry name" value="Ribosomal protein S5 domain 2-like"/>
    <property type="match status" value="1"/>
</dbReference>
<dbReference type="PROSITE" id="PS00648">
    <property type="entry name" value="RIBONUCLEASE_P"/>
    <property type="match status" value="1"/>
</dbReference>
<reference key="1">
    <citation type="submission" date="2009-01" db="EMBL/GenBank/DDBJ databases">
        <title>Complete sequence of chromosome of Arthrobacter chlorophenolicus A6.</title>
        <authorList>
            <consortium name="US DOE Joint Genome Institute"/>
            <person name="Lucas S."/>
            <person name="Copeland A."/>
            <person name="Lapidus A."/>
            <person name="Glavina del Rio T."/>
            <person name="Tice H."/>
            <person name="Bruce D."/>
            <person name="Goodwin L."/>
            <person name="Pitluck S."/>
            <person name="Goltsman E."/>
            <person name="Clum A."/>
            <person name="Larimer F."/>
            <person name="Land M."/>
            <person name="Hauser L."/>
            <person name="Kyrpides N."/>
            <person name="Mikhailova N."/>
            <person name="Jansson J."/>
            <person name="Richardson P."/>
        </authorList>
    </citation>
    <scope>NUCLEOTIDE SEQUENCE [LARGE SCALE GENOMIC DNA]</scope>
    <source>
        <strain>ATCC 700700 / DSM 12829 / CIP 107037 / JCM 12360 / KCTC 9906 / NCIMB 13794 / A6</strain>
    </source>
</reference>
<evidence type="ECO:0000255" key="1">
    <source>
        <dbReference type="HAMAP-Rule" id="MF_00227"/>
    </source>
</evidence>
<evidence type="ECO:0000256" key="2">
    <source>
        <dbReference type="SAM" id="MobiDB-lite"/>
    </source>
</evidence>
<organism>
    <name type="scientific">Pseudarthrobacter chlorophenolicus (strain ATCC 700700 / DSM 12829 / CIP 107037 / JCM 12360 / KCTC 9906 / NCIMB 13794 / A6)</name>
    <name type="common">Arthrobacter chlorophenolicus</name>
    <dbReference type="NCBI Taxonomy" id="452863"/>
    <lineage>
        <taxon>Bacteria</taxon>
        <taxon>Bacillati</taxon>
        <taxon>Actinomycetota</taxon>
        <taxon>Actinomycetes</taxon>
        <taxon>Micrococcales</taxon>
        <taxon>Micrococcaceae</taxon>
        <taxon>Pseudarthrobacter</taxon>
    </lineage>
</organism>